<keyword id="KW-0472">Membrane</keyword>
<keyword id="KW-1185">Reference proteome</keyword>
<keyword id="KW-0812">Transmembrane</keyword>
<keyword id="KW-1133">Transmembrane helix</keyword>
<proteinExistence type="inferred from homology"/>
<feature type="chain" id="PRO_0000214986" description="UPF0154 protein SP_1882">
    <location>
        <begin position="1"/>
        <end position="82"/>
    </location>
</feature>
<feature type="transmembrane region" description="Helical" evidence="1">
    <location>
        <begin position="5"/>
        <end position="25"/>
    </location>
</feature>
<sequence>MDLLLAIVLIVLAFLGGALGGMYLVRKQIEKEFADNPRLNAEAVRTLLSANGQKPSEAKVQQVYHQIIRQQKAALANNKKKK</sequence>
<reference key="1">
    <citation type="journal article" date="2001" name="Science">
        <title>Complete genome sequence of a virulent isolate of Streptococcus pneumoniae.</title>
        <authorList>
            <person name="Tettelin H."/>
            <person name="Nelson K.E."/>
            <person name="Paulsen I.T."/>
            <person name="Eisen J.A."/>
            <person name="Read T.D."/>
            <person name="Peterson S.N."/>
            <person name="Heidelberg J.F."/>
            <person name="DeBoy R.T."/>
            <person name="Haft D.H."/>
            <person name="Dodson R.J."/>
            <person name="Durkin A.S."/>
            <person name="Gwinn M.L."/>
            <person name="Kolonay J.F."/>
            <person name="Nelson W.C."/>
            <person name="Peterson J.D."/>
            <person name="Umayam L.A."/>
            <person name="White O."/>
            <person name="Salzberg S.L."/>
            <person name="Lewis M.R."/>
            <person name="Radune D."/>
            <person name="Holtzapple E.K."/>
            <person name="Khouri H.M."/>
            <person name="Wolf A.M."/>
            <person name="Utterback T.R."/>
            <person name="Hansen C.L."/>
            <person name="McDonald L.A."/>
            <person name="Feldblyum T.V."/>
            <person name="Angiuoli S.V."/>
            <person name="Dickinson T."/>
            <person name="Hickey E.K."/>
            <person name="Holt I.E."/>
            <person name="Loftus B.J."/>
            <person name="Yang F."/>
            <person name="Smith H.O."/>
            <person name="Venter J.C."/>
            <person name="Dougherty B.A."/>
            <person name="Morrison D.A."/>
            <person name="Hollingshead S.K."/>
            <person name="Fraser C.M."/>
        </authorList>
    </citation>
    <scope>NUCLEOTIDE SEQUENCE [LARGE SCALE GENOMIC DNA]</scope>
    <source>
        <strain>ATCC BAA-334 / TIGR4</strain>
    </source>
</reference>
<organism>
    <name type="scientific">Streptococcus pneumoniae serotype 4 (strain ATCC BAA-334 / TIGR4)</name>
    <dbReference type="NCBI Taxonomy" id="170187"/>
    <lineage>
        <taxon>Bacteria</taxon>
        <taxon>Bacillati</taxon>
        <taxon>Bacillota</taxon>
        <taxon>Bacilli</taxon>
        <taxon>Lactobacillales</taxon>
        <taxon>Streptococcaceae</taxon>
        <taxon>Streptococcus</taxon>
    </lineage>
</organism>
<name>Y1882_STRPN</name>
<accession>P67293</accession>
<accession>Q8CYC2</accession>
<accession>Q97NX1</accession>
<comment type="subcellular location">
    <subcellularLocation>
        <location evidence="1">Membrane</location>
        <topology evidence="1">Single-pass membrane protein</topology>
    </subcellularLocation>
</comment>
<comment type="similarity">
    <text evidence="1">Belongs to the UPF0154 family.</text>
</comment>
<dbReference type="EMBL" id="AE005672">
    <property type="protein sequence ID" value="AAK75954.1"/>
    <property type="molecule type" value="Genomic_DNA"/>
</dbReference>
<dbReference type="PIR" id="A95220">
    <property type="entry name" value="A95220"/>
</dbReference>
<dbReference type="RefSeq" id="WP_000364990.1">
    <property type="nucleotide sequence ID" value="NZ_CP155539.1"/>
</dbReference>
<dbReference type="SMR" id="P67293"/>
<dbReference type="PaxDb" id="170187-SP_1882"/>
<dbReference type="EnsemblBacteria" id="AAK75954">
    <property type="protein sequence ID" value="AAK75954"/>
    <property type="gene ID" value="SP_1882"/>
</dbReference>
<dbReference type="KEGG" id="spn:SP_1882"/>
<dbReference type="eggNOG" id="COG3763">
    <property type="taxonomic scope" value="Bacteria"/>
</dbReference>
<dbReference type="PhylomeDB" id="P67293"/>
<dbReference type="BioCyc" id="SPNE170187:G1FZB-1912-MONOMER"/>
<dbReference type="Proteomes" id="UP000000585">
    <property type="component" value="Chromosome"/>
</dbReference>
<dbReference type="GO" id="GO:0005886">
    <property type="term" value="C:plasma membrane"/>
    <property type="evidence" value="ECO:0007669"/>
    <property type="project" value="UniProtKB-UniRule"/>
</dbReference>
<dbReference type="HAMAP" id="MF_00363">
    <property type="entry name" value="UPF0154"/>
    <property type="match status" value="1"/>
</dbReference>
<dbReference type="InterPro" id="IPR005359">
    <property type="entry name" value="UPF0154"/>
</dbReference>
<dbReference type="Pfam" id="PF03672">
    <property type="entry name" value="UPF0154"/>
    <property type="match status" value="1"/>
</dbReference>
<gene>
    <name type="ordered locus">SP_1882</name>
</gene>
<evidence type="ECO:0000255" key="1">
    <source>
        <dbReference type="HAMAP-Rule" id="MF_00363"/>
    </source>
</evidence>
<protein>
    <recommendedName>
        <fullName evidence="1">UPF0154 protein SP_1882</fullName>
    </recommendedName>
</protein>